<reference key="1">
    <citation type="journal article" date="2003" name="J. Bacteriol.">
        <title>Complete genome sequence of the oral pathogenic bacterium Porphyromonas gingivalis strain W83.</title>
        <authorList>
            <person name="Nelson K.E."/>
            <person name="Fleischmann R.D."/>
            <person name="DeBoy R.T."/>
            <person name="Paulsen I.T."/>
            <person name="Fouts D.E."/>
            <person name="Eisen J.A."/>
            <person name="Daugherty S.C."/>
            <person name="Dodson R.J."/>
            <person name="Durkin A.S."/>
            <person name="Gwinn M.L."/>
            <person name="Haft D.H."/>
            <person name="Kolonay J.F."/>
            <person name="Nelson W.C."/>
            <person name="Mason T.M."/>
            <person name="Tallon L."/>
            <person name="Gray J."/>
            <person name="Granger D."/>
            <person name="Tettelin H."/>
            <person name="Dong H."/>
            <person name="Galvin J.L."/>
            <person name="Duncan M.J."/>
            <person name="Dewhirst F.E."/>
            <person name="Fraser C.M."/>
        </authorList>
    </citation>
    <scope>NUCLEOTIDE SEQUENCE [LARGE SCALE GENOMIC DNA]</scope>
    <source>
        <strain>ATCC BAA-308 / W83</strain>
    </source>
</reference>
<feature type="chain" id="PRO_0000227458" description="UvrABC system protein C">
    <location>
        <begin position="1"/>
        <end position="599"/>
    </location>
</feature>
<feature type="domain" description="GIY-YIG" evidence="1">
    <location>
        <begin position="15"/>
        <end position="93"/>
    </location>
</feature>
<feature type="domain" description="UVR" evidence="1">
    <location>
        <begin position="207"/>
        <end position="242"/>
    </location>
</feature>
<proteinExistence type="inferred from homology"/>
<accession>Q7MTG8</accession>
<dbReference type="EMBL" id="AE015924">
    <property type="protein sequence ID" value="AAQ66964.1"/>
    <property type="molecule type" value="Genomic_DNA"/>
</dbReference>
<dbReference type="RefSeq" id="WP_005874945.1">
    <property type="nucleotide sequence ID" value="NC_002950.2"/>
</dbReference>
<dbReference type="SMR" id="Q7MTG8"/>
<dbReference type="STRING" id="242619.PG_1993"/>
<dbReference type="EnsemblBacteria" id="AAQ66964">
    <property type="protein sequence ID" value="AAQ66964"/>
    <property type="gene ID" value="PG_1993"/>
</dbReference>
<dbReference type="KEGG" id="pgi:PG_1993"/>
<dbReference type="eggNOG" id="COG0322">
    <property type="taxonomic scope" value="Bacteria"/>
</dbReference>
<dbReference type="HOGENOM" id="CLU_014841_3_2_10"/>
<dbReference type="Proteomes" id="UP000000588">
    <property type="component" value="Chromosome"/>
</dbReference>
<dbReference type="GO" id="GO:0005737">
    <property type="term" value="C:cytoplasm"/>
    <property type="evidence" value="ECO:0007669"/>
    <property type="project" value="UniProtKB-SubCell"/>
</dbReference>
<dbReference type="GO" id="GO:0009380">
    <property type="term" value="C:excinuclease repair complex"/>
    <property type="evidence" value="ECO:0007669"/>
    <property type="project" value="InterPro"/>
</dbReference>
<dbReference type="GO" id="GO:0003677">
    <property type="term" value="F:DNA binding"/>
    <property type="evidence" value="ECO:0007669"/>
    <property type="project" value="UniProtKB-UniRule"/>
</dbReference>
<dbReference type="GO" id="GO:0009381">
    <property type="term" value="F:excinuclease ABC activity"/>
    <property type="evidence" value="ECO:0007669"/>
    <property type="project" value="UniProtKB-UniRule"/>
</dbReference>
<dbReference type="GO" id="GO:0006289">
    <property type="term" value="P:nucleotide-excision repair"/>
    <property type="evidence" value="ECO:0007669"/>
    <property type="project" value="UniProtKB-UniRule"/>
</dbReference>
<dbReference type="GO" id="GO:0009432">
    <property type="term" value="P:SOS response"/>
    <property type="evidence" value="ECO:0007669"/>
    <property type="project" value="UniProtKB-UniRule"/>
</dbReference>
<dbReference type="CDD" id="cd10434">
    <property type="entry name" value="GIY-YIG_UvrC_Cho"/>
    <property type="match status" value="1"/>
</dbReference>
<dbReference type="FunFam" id="3.40.1440.10:FF:000001">
    <property type="entry name" value="UvrABC system protein C"/>
    <property type="match status" value="1"/>
</dbReference>
<dbReference type="Gene3D" id="1.10.150.20">
    <property type="entry name" value="5' to 3' exonuclease, C-terminal subdomain"/>
    <property type="match status" value="1"/>
</dbReference>
<dbReference type="Gene3D" id="3.40.1440.10">
    <property type="entry name" value="GIY-YIG endonuclease"/>
    <property type="match status" value="1"/>
</dbReference>
<dbReference type="Gene3D" id="3.30.420.340">
    <property type="entry name" value="UvrC, RNAse H endonuclease domain"/>
    <property type="match status" value="1"/>
</dbReference>
<dbReference type="HAMAP" id="MF_00203">
    <property type="entry name" value="UvrC"/>
    <property type="match status" value="1"/>
</dbReference>
<dbReference type="InterPro" id="IPR000305">
    <property type="entry name" value="GIY-YIG_endonuc"/>
</dbReference>
<dbReference type="InterPro" id="IPR035901">
    <property type="entry name" value="GIY-YIG_endonuc_sf"/>
</dbReference>
<dbReference type="InterPro" id="IPR047296">
    <property type="entry name" value="GIY-YIG_UvrC_Cho"/>
</dbReference>
<dbReference type="InterPro" id="IPR010994">
    <property type="entry name" value="RuvA_2-like"/>
</dbReference>
<dbReference type="InterPro" id="IPR036876">
    <property type="entry name" value="UVR_dom_sf"/>
</dbReference>
<dbReference type="InterPro" id="IPR050066">
    <property type="entry name" value="UvrABC_protein_C"/>
</dbReference>
<dbReference type="InterPro" id="IPR004791">
    <property type="entry name" value="UvrC"/>
</dbReference>
<dbReference type="InterPro" id="IPR001162">
    <property type="entry name" value="UvrC_RNase_H_dom"/>
</dbReference>
<dbReference type="InterPro" id="IPR038476">
    <property type="entry name" value="UvrC_RNase_H_dom_sf"/>
</dbReference>
<dbReference type="NCBIfam" id="TIGR00194">
    <property type="entry name" value="uvrC"/>
    <property type="match status" value="1"/>
</dbReference>
<dbReference type="PANTHER" id="PTHR30562:SF1">
    <property type="entry name" value="UVRABC SYSTEM PROTEIN C"/>
    <property type="match status" value="1"/>
</dbReference>
<dbReference type="PANTHER" id="PTHR30562">
    <property type="entry name" value="UVRC/OXIDOREDUCTASE"/>
    <property type="match status" value="1"/>
</dbReference>
<dbReference type="Pfam" id="PF01541">
    <property type="entry name" value="GIY-YIG"/>
    <property type="match status" value="1"/>
</dbReference>
<dbReference type="Pfam" id="PF14520">
    <property type="entry name" value="HHH_5"/>
    <property type="match status" value="1"/>
</dbReference>
<dbReference type="Pfam" id="PF22920">
    <property type="entry name" value="UvrC_RNaseH"/>
    <property type="match status" value="1"/>
</dbReference>
<dbReference type="Pfam" id="PF08459">
    <property type="entry name" value="UvrC_RNaseH_dom"/>
    <property type="match status" value="1"/>
</dbReference>
<dbReference type="SMART" id="SM00465">
    <property type="entry name" value="GIYc"/>
    <property type="match status" value="1"/>
</dbReference>
<dbReference type="SUPFAM" id="SSF46600">
    <property type="entry name" value="C-terminal UvrC-binding domain of UvrB"/>
    <property type="match status" value="1"/>
</dbReference>
<dbReference type="SUPFAM" id="SSF82771">
    <property type="entry name" value="GIY-YIG endonuclease"/>
    <property type="match status" value="1"/>
</dbReference>
<dbReference type="SUPFAM" id="SSF47781">
    <property type="entry name" value="RuvA domain 2-like"/>
    <property type="match status" value="1"/>
</dbReference>
<dbReference type="PROSITE" id="PS50164">
    <property type="entry name" value="GIY_YIG"/>
    <property type="match status" value="1"/>
</dbReference>
<dbReference type="PROSITE" id="PS50165">
    <property type="entry name" value="UVRC"/>
    <property type="match status" value="1"/>
</dbReference>
<sequence length="599" mass="69743">MTPDELNIILPTLPEKPGCYQYFDEDGKVIYVGKAKNLRRRVSSYFYKEHADRKTRILVRQIRSIKYIVVDSEGDALLLENSLIKEYQPRYNVLLKDGKTYPSIVIKREPFPRIFATRDIKKDGSEYFGPYPGALIAKGMLRLVKEIYPIRTCKLDLREEKIRQGRYRVCLQYHIKKCKGPCIGNQTSNEYESNVSEIRDLLRGNLHRLVRMYRDRMQVYSEGLRFEEAQICKERIELLERYEAKHTVVPRNIDNVDVFSYDEDEHTAYINYMHIEHGGINRVYTLEYRKQIEESKEELLAAAITELRQRFESNAHEIVLPFDTGWQTGESITTTIPRRGDKRKLLELSEKNVAQYKLDKLKRAEKLNPEQRALHIVHGIQKDLHLDRPPKHIECFDNSNIQGTSPVAACVVFKMGKPSKKDYRKFHVKTVEGPNDFASMREIISRHYTRLTEENLPLPDLIVVDGGKGQLSAAYETLDKLGLIGKIPIIGLAERLEEIFFPKDPVPLILDKKSETLKVIQHLRDEAHRFGIGFHRDVRSKKQIQSELDNIKGIGKKTKEDLLRHFKSVKRIRSAEEEELSALIGRNKAKLLYEGLRKK</sequence>
<evidence type="ECO:0000255" key="1">
    <source>
        <dbReference type="HAMAP-Rule" id="MF_00203"/>
    </source>
</evidence>
<protein>
    <recommendedName>
        <fullName evidence="1">UvrABC system protein C</fullName>
        <shortName evidence="1">Protein UvrC</shortName>
    </recommendedName>
    <alternativeName>
        <fullName evidence="1">Excinuclease ABC subunit C</fullName>
    </alternativeName>
</protein>
<keyword id="KW-0963">Cytoplasm</keyword>
<keyword id="KW-0227">DNA damage</keyword>
<keyword id="KW-0228">DNA excision</keyword>
<keyword id="KW-0234">DNA repair</keyword>
<keyword id="KW-0267">Excision nuclease</keyword>
<keyword id="KW-1185">Reference proteome</keyword>
<keyword id="KW-0742">SOS response</keyword>
<gene>
    <name evidence="1" type="primary">uvrC</name>
    <name type="ordered locus">PG_1993</name>
</gene>
<organism>
    <name type="scientific">Porphyromonas gingivalis (strain ATCC BAA-308 / W83)</name>
    <dbReference type="NCBI Taxonomy" id="242619"/>
    <lineage>
        <taxon>Bacteria</taxon>
        <taxon>Pseudomonadati</taxon>
        <taxon>Bacteroidota</taxon>
        <taxon>Bacteroidia</taxon>
        <taxon>Bacteroidales</taxon>
        <taxon>Porphyromonadaceae</taxon>
        <taxon>Porphyromonas</taxon>
    </lineage>
</organism>
<name>UVRC_PORGI</name>
<comment type="function">
    <text evidence="1">The UvrABC repair system catalyzes the recognition and processing of DNA lesions. UvrC both incises the 5' and 3' sides of the lesion. The N-terminal half is responsible for the 3' incision and the C-terminal half is responsible for the 5' incision.</text>
</comment>
<comment type="subunit">
    <text evidence="1">Interacts with UvrB in an incision complex.</text>
</comment>
<comment type="subcellular location">
    <subcellularLocation>
        <location evidence="1">Cytoplasm</location>
    </subcellularLocation>
</comment>
<comment type="similarity">
    <text evidence="1">Belongs to the UvrC family.</text>
</comment>